<organism>
    <name type="scientific">Staphylococcus aureus (strain COL)</name>
    <dbReference type="NCBI Taxonomy" id="93062"/>
    <lineage>
        <taxon>Bacteria</taxon>
        <taxon>Bacillati</taxon>
        <taxon>Bacillota</taxon>
        <taxon>Bacilli</taxon>
        <taxon>Bacillales</taxon>
        <taxon>Staphylococcaceae</taxon>
        <taxon>Staphylococcus</taxon>
    </lineage>
</organism>
<dbReference type="EC" id="2.10.1.1"/>
<dbReference type="EMBL" id="CP000046">
    <property type="protein sequence ID" value="AAW38486.1"/>
    <property type="molecule type" value="Genomic_DNA"/>
</dbReference>
<dbReference type="SMR" id="Q5HDT4"/>
<dbReference type="KEGG" id="sac:SACOL2266"/>
<dbReference type="HOGENOM" id="CLU_010186_7_1_9"/>
<dbReference type="UniPathway" id="UPA00344"/>
<dbReference type="Proteomes" id="UP000000530">
    <property type="component" value="Chromosome"/>
</dbReference>
<dbReference type="GO" id="GO:0005829">
    <property type="term" value="C:cytosol"/>
    <property type="evidence" value="ECO:0007669"/>
    <property type="project" value="TreeGrafter"/>
</dbReference>
<dbReference type="GO" id="GO:0046872">
    <property type="term" value="F:metal ion binding"/>
    <property type="evidence" value="ECO:0007669"/>
    <property type="project" value="UniProtKB-KW"/>
</dbReference>
<dbReference type="GO" id="GO:0061599">
    <property type="term" value="F:molybdopterin molybdotransferase activity"/>
    <property type="evidence" value="ECO:0007669"/>
    <property type="project" value="UniProtKB-EC"/>
</dbReference>
<dbReference type="GO" id="GO:0006777">
    <property type="term" value="P:Mo-molybdopterin cofactor biosynthetic process"/>
    <property type="evidence" value="ECO:0007669"/>
    <property type="project" value="UniProtKB-KW"/>
</dbReference>
<dbReference type="CDD" id="cd00887">
    <property type="entry name" value="MoeA"/>
    <property type="match status" value="1"/>
</dbReference>
<dbReference type="FunFam" id="2.170.190.11:FF:000001">
    <property type="entry name" value="Molybdopterin molybdenumtransferase"/>
    <property type="match status" value="1"/>
</dbReference>
<dbReference type="FunFam" id="2.40.340.10:FF:000002">
    <property type="entry name" value="Molybdopterin molybdenumtransferase"/>
    <property type="match status" value="1"/>
</dbReference>
<dbReference type="FunFam" id="3.40.980.10:FF:000004">
    <property type="entry name" value="Molybdopterin molybdenumtransferase"/>
    <property type="match status" value="1"/>
</dbReference>
<dbReference type="Gene3D" id="3.40.980.10">
    <property type="entry name" value="MoaB/Mog-like domain"/>
    <property type="match status" value="1"/>
</dbReference>
<dbReference type="Gene3D" id="2.40.340.10">
    <property type="entry name" value="MoeA, C-terminal, domain IV"/>
    <property type="match status" value="1"/>
</dbReference>
<dbReference type="Gene3D" id="3.90.105.10">
    <property type="entry name" value="Molybdopterin biosynthesis moea protein, domain 2"/>
    <property type="match status" value="1"/>
</dbReference>
<dbReference type="Gene3D" id="2.170.190.11">
    <property type="entry name" value="Molybdopterin biosynthesis moea protein, domain 3"/>
    <property type="match status" value="1"/>
</dbReference>
<dbReference type="InterPro" id="IPR036425">
    <property type="entry name" value="MoaB/Mog-like_dom_sf"/>
</dbReference>
<dbReference type="InterPro" id="IPR001453">
    <property type="entry name" value="MoaB/Mog_dom"/>
</dbReference>
<dbReference type="InterPro" id="IPR038987">
    <property type="entry name" value="MoeA-like"/>
</dbReference>
<dbReference type="InterPro" id="IPR005111">
    <property type="entry name" value="MoeA_C_domain_IV"/>
</dbReference>
<dbReference type="InterPro" id="IPR036688">
    <property type="entry name" value="MoeA_C_domain_IV_sf"/>
</dbReference>
<dbReference type="InterPro" id="IPR005110">
    <property type="entry name" value="MoeA_linker/N"/>
</dbReference>
<dbReference type="InterPro" id="IPR036135">
    <property type="entry name" value="MoeA_linker/N_sf"/>
</dbReference>
<dbReference type="NCBIfam" id="NF045515">
    <property type="entry name" value="Glp_gephyrin"/>
    <property type="match status" value="1"/>
</dbReference>
<dbReference type="NCBIfam" id="TIGR00177">
    <property type="entry name" value="molyb_syn"/>
    <property type="match status" value="1"/>
</dbReference>
<dbReference type="PANTHER" id="PTHR10192:SF5">
    <property type="entry name" value="GEPHYRIN"/>
    <property type="match status" value="1"/>
</dbReference>
<dbReference type="PANTHER" id="PTHR10192">
    <property type="entry name" value="MOLYBDOPTERIN BIOSYNTHESIS PROTEIN"/>
    <property type="match status" value="1"/>
</dbReference>
<dbReference type="Pfam" id="PF00994">
    <property type="entry name" value="MoCF_biosynth"/>
    <property type="match status" value="1"/>
</dbReference>
<dbReference type="Pfam" id="PF03454">
    <property type="entry name" value="MoeA_C"/>
    <property type="match status" value="1"/>
</dbReference>
<dbReference type="Pfam" id="PF03453">
    <property type="entry name" value="MoeA_N"/>
    <property type="match status" value="1"/>
</dbReference>
<dbReference type="SMART" id="SM00852">
    <property type="entry name" value="MoCF_biosynth"/>
    <property type="match status" value="1"/>
</dbReference>
<dbReference type="SUPFAM" id="SSF63867">
    <property type="entry name" value="MoeA C-terminal domain-like"/>
    <property type="match status" value="1"/>
</dbReference>
<dbReference type="SUPFAM" id="SSF63882">
    <property type="entry name" value="MoeA N-terminal region -like"/>
    <property type="match status" value="1"/>
</dbReference>
<dbReference type="SUPFAM" id="SSF53218">
    <property type="entry name" value="Molybdenum cofactor biosynthesis proteins"/>
    <property type="match status" value="1"/>
</dbReference>
<comment type="function">
    <text evidence="1">Catalyzes the insertion of molybdate into adenylated molybdopterin with the concomitant release of AMP.</text>
</comment>
<comment type="catalytic activity">
    <reaction>
        <text>adenylyl-molybdopterin + molybdate = Mo-molybdopterin + AMP + H(+)</text>
        <dbReference type="Rhea" id="RHEA:35047"/>
        <dbReference type="ChEBI" id="CHEBI:15378"/>
        <dbReference type="ChEBI" id="CHEBI:36264"/>
        <dbReference type="ChEBI" id="CHEBI:62727"/>
        <dbReference type="ChEBI" id="CHEBI:71302"/>
        <dbReference type="ChEBI" id="CHEBI:456215"/>
        <dbReference type="EC" id="2.10.1.1"/>
    </reaction>
</comment>
<comment type="cofactor">
    <cofactor evidence="1">
        <name>Mg(2+)</name>
        <dbReference type="ChEBI" id="CHEBI:18420"/>
    </cofactor>
    <text evidence="1">Binds 1 Mg(2+) ion per subunit.</text>
</comment>
<comment type="pathway">
    <text>Cofactor biosynthesis; molybdopterin biosynthesis.</text>
</comment>
<comment type="similarity">
    <text evidence="2">Belongs to the MoeA family.</text>
</comment>
<proteinExistence type="inferred from homology"/>
<keyword id="KW-0460">Magnesium</keyword>
<keyword id="KW-0479">Metal-binding</keyword>
<keyword id="KW-0500">Molybdenum</keyword>
<keyword id="KW-0501">Molybdenum cofactor biosynthesis</keyword>
<keyword id="KW-0808">Transferase</keyword>
<protein>
    <recommendedName>
        <fullName>Molybdopterin molybdenumtransferase</fullName>
        <shortName>MPT Mo-transferase</shortName>
        <ecNumber>2.10.1.1</ecNumber>
    </recommendedName>
</protein>
<sequence length="419" mass="45017">MVVEKRNPIPVKEAIQRIVNQQSSMPAITVALEKSLNHILAEDIVATYDIPRFDKSPYDGFAIRSVDSQGASGQNRIEFKVIDHIGAGSVSDKLVGDHEAVRIMTGAQIPNGADAVVMFEQTIELEDTFTIRKPFSKNENISLKGEETKTGDVVLKKGQVINPGAIAVLATYGYAEVKVIKQPSVAVIATGSELLDVNDVLEDGKIRNSNGPMIRALAEKLGLEVGIYKTQKDDLDSGIQVVKEAMEKHDIVITTGGVSVGDFDYLPEIYKAVKAEVLFNKVAMRPGSVTTVAFVDGKYLFGLSGNPSACFTGFELFVKPAVKHMCGALEVFPQIIKATLMEDFTKANPFTRFIRAKATLTSAGATVVPSGFNKSGAVVAIAHANCMVMLPGGSRGFKAGHTVDIILTESDAAEEELLL</sequence>
<gene>
    <name type="primary">moeA</name>
    <name type="ordered locus">SACOL2266</name>
</gene>
<accession>Q5HDT4</accession>
<reference key="1">
    <citation type="journal article" date="2005" name="J. Bacteriol.">
        <title>Insights on evolution of virulence and resistance from the complete genome analysis of an early methicillin-resistant Staphylococcus aureus strain and a biofilm-producing methicillin-resistant Staphylococcus epidermidis strain.</title>
        <authorList>
            <person name="Gill S.R."/>
            <person name="Fouts D.E."/>
            <person name="Archer G.L."/>
            <person name="Mongodin E.F."/>
            <person name="DeBoy R.T."/>
            <person name="Ravel J."/>
            <person name="Paulsen I.T."/>
            <person name="Kolonay J.F."/>
            <person name="Brinkac L.M."/>
            <person name="Beanan M.J."/>
            <person name="Dodson R.J."/>
            <person name="Daugherty S.C."/>
            <person name="Madupu R."/>
            <person name="Angiuoli S.V."/>
            <person name="Durkin A.S."/>
            <person name="Haft D.H."/>
            <person name="Vamathevan J.J."/>
            <person name="Khouri H."/>
            <person name="Utterback T.R."/>
            <person name="Lee C."/>
            <person name="Dimitrov G."/>
            <person name="Jiang L."/>
            <person name="Qin H."/>
            <person name="Weidman J."/>
            <person name="Tran K."/>
            <person name="Kang K.H."/>
            <person name="Hance I.R."/>
            <person name="Nelson K.E."/>
            <person name="Fraser C.M."/>
        </authorList>
    </citation>
    <scope>NUCLEOTIDE SEQUENCE [LARGE SCALE GENOMIC DNA]</scope>
    <source>
        <strain>COL</strain>
    </source>
</reference>
<evidence type="ECO:0000250" key="1"/>
<evidence type="ECO:0000305" key="2"/>
<feature type="chain" id="PRO_0000170994" description="Molybdopterin molybdenumtransferase">
    <location>
        <begin position="1"/>
        <end position="419"/>
    </location>
</feature>
<name>MOEA_STAAC</name>